<comment type="function">
    <text evidence="1">One of several proteins that assist in the late maturation steps of the functional core of the 30S ribosomal subunit. Associates with free 30S ribosomal subunits (but not with 30S subunits that are part of 70S ribosomes or polysomes). Required for efficient processing of 16S rRNA. May interact with the 5'-terminal helix region of 16S rRNA.</text>
</comment>
<comment type="subunit">
    <text evidence="1">Monomer. Binds 30S ribosomal subunits, but not 50S ribosomal subunits or 70S ribosomes.</text>
</comment>
<comment type="subcellular location">
    <subcellularLocation>
        <location evidence="1">Cytoplasm</location>
    </subcellularLocation>
</comment>
<comment type="similarity">
    <text evidence="1">Belongs to the RbfA family.</text>
</comment>
<organism>
    <name type="scientific">Levilactobacillus brevis (strain ATCC 367 / BCRC 12310 / CIP 105137 / JCM 1170 / LMG 11437 / NCIMB 947 / NCTC 947)</name>
    <name type="common">Lactobacillus brevis</name>
    <dbReference type="NCBI Taxonomy" id="387344"/>
    <lineage>
        <taxon>Bacteria</taxon>
        <taxon>Bacillati</taxon>
        <taxon>Bacillota</taxon>
        <taxon>Bacilli</taxon>
        <taxon>Lactobacillales</taxon>
        <taxon>Lactobacillaceae</taxon>
        <taxon>Levilactobacillus</taxon>
    </lineage>
</organism>
<proteinExistence type="inferred from homology"/>
<gene>
    <name evidence="1" type="primary">rbfA</name>
    <name type="ordered locus">LVIS_1334</name>
</gene>
<reference key="1">
    <citation type="journal article" date="2006" name="Proc. Natl. Acad. Sci. U.S.A.">
        <title>Comparative genomics of the lactic acid bacteria.</title>
        <authorList>
            <person name="Makarova K.S."/>
            <person name="Slesarev A."/>
            <person name="Wolf Y.I."/>
            <person name="Sorokin A."/>
            <person name="Mirkin B."/>
            <person name="Koonin E.V."/>
            <person name="Pavlov A."/>
            <person name="Pavlova N."/>
            <person name="Karamychev V."/>
            <person name="Polouchine N."/>
            <person name="Shakhova V."/>
            <person name="Grigoriev I."/>
            <person name="Lou Y."/>
            <person name="Rohksar D."/>
            <person name="Lucas S."/>
            <person name="Huang K."/>
            <person name="Goodstein D.M."/>
            <person name="Hawkins T."/>
            <person name="Plengvidhya V."/>
            <person name="Welker D."/>
            <person name="Hughes J."/>
            <person name="Goh Y."/>
            <person name="Benson A."/>
            <person name="Baldwin K."/>
            <person name="Lee J.-H."/>
            <person name="Diaz-Muniz I."/>
            <person name="Dosti B."/>
            <person name="Smeianov V."/>
            <person name="Wechter W."/>
            <person name="Barabote R."/>
            <person name="Lorca G."/>
            <person name="Altermann E."/>
            <person name="Barrangou R."/>
            <person name="Ganesan B."/>
            <person name="Xie Y."/>
            <person name="Rawsthorne H."/>
            <person name="Tamir D."/>
            <person name="Parker C."/>
            <person name="Breidt F."/>
            <person name="Broadbent J.R."/>
            <person name="Hutkins R."/>
            <person name="O'Sullivan D."/>
            <person name="Steele J."/>
            <person name="Unlu G."/>
            <person name="Saier M.H. Jr."/>
            <person name="Klaenhammer T."/>
            <person name="Richardson P."/>
            <person name="Kozyavkin S."/>
            <person name="Weimer B.C."/>
            <person name="Mills D.A."/>
        </authorList>
    </citation>
    <scope>NUCLEOTIDE SEQUENCE [LARGE SCALE GENOMIC DNA]</scope>
    <source>
        <strain>ATCC 367 / BCRC 12310 / CIP 105137 / JCM 1170 / LMG 11437 / NCIMB 947 / NCTC 947</strain>
    </source>
</reference>
<protein>
    <recommendedName>
        <fullName evidence="1">Ribosome-binding factor A</fullName>
    </recommendedName>
</protein>
<dbReference type="EMBL" id="CP000416">
    <property type="protein sequence ID" value="ABJ64436.1"/>
    <property type="molecule type" value="Genomic_DNA"/>
</dbReference>
<dbReference type="RefSeq" id="WP_011668009.1">
    <property type="nucleotide sequence ID" value="NC_008497.1"/>
</dbReference>
<dbReference type="SMR" id="Q03QT6"/>
<dbReference type="STRING" id="387344.LVIS_1334"/>
<dbReference type="GeneID" id="56993104"/>
<dbReference type="KEGG" id="lbr:LVIS_1334"/>
<dbReference type="eggNOG" id="COG0858">
    <property type="taxonomic scope" value="Bacteria"/>
</dbReference>
<dbReference type="HOGENOM" id="CLU_089475_3_0_9"/>
<dbReference type="Proteomes" id="UP000001652">
    <property type="component" value="Chromosome"/>
</dbReference>
<dbReference type="GO" id="GO:0005829">
    <property type="term" value="C:cytosol"/>
    <property type="evidence" value="ECO:0007669"/>
    <property type="project" value="TreeGrafter"/>
</dbReference>
<dbReference type="GO" id="GO:0043024">
    <property type="term" value="F:ribosomal small subunit binding"/>
    <property type="evidence" value="ECO:0007669"/>
    <property type="project" value="TreeGrafter"/>
</dbReference>
<dbReference type="GO" id="GO:0030490">
    <property type="term" value="P:maturation of SSU-rRNA"/>
    <property type="evidence" value="ECO:0007669"/>
    <property type="project" value="UniProtKB-UniRule"/>
</dbReference>
<dbReference type="Gene3D" id="3.30.300.20">
    <property type="match status" value="1"/>
</dbReference>
<dbReference type="HAMAP" id="MF_00003">
    <property type="entry name" value="RbfA"/>
    <property type="match status" value="1"/>
</dbReference>
<dbReference type="InterPro" id="IPR015946">
    <property type="entry name" value="KH_dom-like_a/b"/>
</dbReference>
<dbReference type="InterPro" id="IPR000238">
    <property type="entry name" value="RbfA"/>
</dbReference>
<dbReference type="InterPro" id="IPR023799">
    <property type="entry name" value="RbfA_dom_sf"/>
</dbReference>
<dbReference type="InterPro" id="IPR020053">
    <property type="entry name" value="Ribosome-bd_factorA_CS"/>
</dbReference>
<dbReference type="NCBIfam" id="TIGR00082">
    <property type="entry name" value="rbfA"/>
    <property type="match status" value="1"/>
</dbReference>
<dbReference type="PANTHER" id="PTHR33515">
    <property type="entry name" value="RIBOSOME-BINDING FACTOR A, CHLOROPLASTIC-RELATED"/>
    <property type="match status" value="1"/>
</dbReference>
<dbReference type="PANTHER" id="PTHR33515:SF1">
    <property type="entry name" value="RIBOSOME-BINDING FACTOR A, CHLOROPLASTIC-RELATED"/>
    <property type="match status" value="1"/>
</dbReference>
<dbReference type="Pfam" id="PF02033">
    <property type="entry name" value="RBFA"/>
    <property type="match status" value="1"/>
</dbReference>
<dbReference type="SUPFAM" id="SSF89919">
    <property type="entry name" value="Ribosome-binding factor A, RbfA"/>
    <property type="match status" value="1"/>
</dbReference>
<dbReference type="PROSITE" id="PS01319">
    <property type="entry name" value="RBFA"/>
    <property type="match status" value="1"/>
</dbReference>
<name>RBFA_LEVBA</name>
<accession>Q03QT6</accession>
<feature type="chain" id="PRO_0000321226" description="Ribosome-binding factor A">
    <location>
        <begin position="1"/>
        <end position="116"/>
    </location>
</feature>
<evidence type="ECO:0000255" key="1">
    <source>
        <dbReference type="HAMAP-Rule" id="MF_00003"/>
    </source>
</evidence>
<keyword id="KW-0963">Cytoplasm</keyword>
<keyword id="KW-1185">Reference proteome</keyword>
<keyword id="KW-0690">Ribosome biogenesis</keyword>
<sequence>MAQYRVGRLEQEIQREVTDILLKRVRDPRVEGVTVTGVEVTGDLQQATIYYSILSDKASSAEKTAAGLKKATGLIRSELGSRLSIYKTPELTFEQDGSVRYGSRIDELLNDLHHQD</sequence>